<protein>
    <recommendedName>
        <fullName evidence="1">Large ribosomal subunit protein uL11</fullName>
    </recommendedName>
    <alternativeName>
        <fullName evidence="2">50S ribosomal protein L11</fullName>
    </alternativeName>
</protein>
<proteinExistence type="inferred from homology"/>
<accession>Q1R0I6</accession>
<organism>
    <name type="scientific">Chromohalobacter salexigens (strain ATCC BAA-138 / DSM 3043 / CIP 106854 / NCIMB 13768 / 1H11)</name>
    <dbReference type="NCBI Taxonomy" id="290398"/>
    <lineage>
        <taxon>Bacteria</taxon>
        <taxon>Pseudomonadati</taxon>
        <taxon>Pseudomonadota</taxon>
        <taxon>Gammaproteobacteria</taxon>
        <taxon>Oceanospirillales</taxon>
        <taxon>Halomonadaceae</taxon>
        <taxon>Chromohalobacter</taxon>
    </lineage>
</organism>
<keyword id="KW-0488">Methylation</keyword>
<keyword id="KW-1185">Reference proteome</keyword>
<keyword id="KW-0687">Ribonucleoprotein</keyword>
<keyword id="KW-0689">Ribosomal protein</keyword>
<keyword id="KW-0694">RNA-binding</keyword>
<keyword id="KW-0699">rRNA-binding</keyword>
<feature type="chain" id="PRO_0000258139" description="Large ribosomal subunit protein uL11">
    <location>
        <begin position="1"/>
        <end position="143"/>
    </location>
</feature>
<dbReference type="EMBL" id="CP000285">
    <property type="protein sequence ID" value="ABE57772.1"/>
    <property type="molecule type" value="Genomic_DNA"/>
</dbReference>
<dbReference type="RefSeq" id="WP_011505718.1">
    <property type="nucleotide sequence ID" value="NC_007963.1"/>
</dbReference>
<dbReference type="SMR" id="Q1R0I6"/>
<dbReference type="STRING" id="290398.Csal_0410"/>
<dbReference type="GeneID" id="95333163"/>
<dbReference type="KEGG" id="csa:Csal_0410"/>
<dbReference type="eggNOG" id="COG0080">
    <property type="taxonomic scope" value="Bacteria"/>
</dbReference>
<dbReference type="HOGENOM" id="CLU_074237_2_0_6"/>
<dbReference type="OrthoDB" id="9802408at2"/>
<dbReference type="Proteomes" id="UP000000239">
    <property type="component" value="Chromosome"/>
</dbReference>
<dbReference type="GO" id="GO:0022625">
    <property type="term" value="C:cytosolic large ribosomal subunit"/>
    <property type="evidence" value="ECO:0007669"/>
    <property type="project" value="TreeGrafter"/>
</dbReference>
<dbReference type="GO" id="GO:0070180">
    <property type="term" value="F:large ribosomal subunit rRNA binding"/>
    <property type="evidence" value="ECO:0007669"/>
    <property type="project" value="UniProtKB-UniRule"/>
</dbReference>
<dbReference type="GO" id="GO:0003735">
    <property type="term" value="F:structural constituent of ribosome"/>
    <property type="evidence" value="ECO:0007669"/>
    <property type="project" value="InterPro"/>
</dbReference>
<dbReference type="GO" id="GO:0006412">
    <property type="term" value="P:translation"/>
    <property type="evidence" value="ECO:0007669"/>
    <property type="project" value="UniProtKB-UniRule"/>
</dbReference>
<dbReference type="CDD" id="cd00349">
    <property type="entry name" value="Ribosomal_L11"/>
    <property type="match status" value="1"/>
</dbReference>
<dbReference type="FunFam" id="1.10.10.250:FF:000001">
    <property type="entry name" value="50S ribosomal protein L11"/>
    <property type="match status" value="1"/>
</dbReference>
<dbReference type="FunFam" id="3.30.1550.10:FF:000001">
    <property type="entry name" value="50S ribosomal protein L11"/>
    <property type="match status" value="1"/>
</dbReference>
<dbReference type="Gene3D" id="1.10.10.250">
    <property type="entry name" value="Ribosomal protein L11, C-terminal domain"/>
    <property type="match status" value="1"/>
</dbReference>
<dbReference type="Gene3D" id="3.30.1550.10">
    <property type="entry name" value="Ribosomal protein L11/L12, N-terminal domain"/>
    <property type="match status" value="1"/>
</dbReference>
<dbReference type="HAMAP" id="MF_00736">
    <property type="entry name" value="Ribosomal_uL11"/>
    <property type="match status" value="1"/>
</dbReference>
<dbReference type="InterPro" id="IPR000911">
    <property type="entry name" value="Ribosomal_uL11"/>
</dbReference>
<dbReference type="InterPro" id="IPR006519">
    <property type="entry name" value="Ribosomal_uL11_bac-typ"/>
</dbReference>
<dbReference type="InterPro" id="IPR020783">
    <property type="entry name" value="Ribosomal_uL11_C"/>
</dbReference>
<dbReference type="InterPro" id="IPR036769">
    <property type="entry name" value="Ribosomal_uL11_C_sf"/>
</dbReference>
<dbReference type="InterPro" id="IPR020785">
    <property type="entry name" value="Ribosomal_uL11_CS"/>
</dbReference>
<dbReference type="InterPro" id="IPR020784">
    <property type="entry name" value="Ribosomal_uL11_N"/>
</dbReference>
<dbReference type="InterPro" id="IPR036796">
    <property type="entry name" value="Ribosomal_uL11_N_sf"/>
</dbReference>
<dbReference type="NCBIfam" id="TIGR01632">
    <property type="entry name" value="L11_bact"/>
    <property type="match status" value="1"/>
</dbReference>
<dbReference type="PANTHER" id="PTHR11661">
    <property type="entry name" value="60S RIBOSOMAL PROTEIN L12"/>
    <property type="match status" value="1"/>
</dbReference>
<dbReference type="PANTHER" id="PTHR11661:SF1">
    <property type="entry name" value="LARGE RIBOSOMAL SUBUNIT PROTEIN UL11M"/>
    <property type="match status" value="1"/>
</dbReference>
<dbReference type="Pfam" id="PF00298">
    <property type="entry name" value="Ribosomal_L11"/>
    <property type="match status" value="1"/>
</dbReference>
<dbReference type="Pfam" id="PF03946">
    <property type="entry name" value="Ribosomal_L11_N"/>
    <property type="match status" value="1"/>
</dbReference>
<dbReference type="SMART" id="SM00649">
    <property type="entry name" value="RL11"/>
    <property type="match status" value="1"/>
</dbReference>
<dbReference type="SUPFAM" id="SSF54747">
    <property type="entry name" value="Ribosomal L11/L12e N-terminal domain"/>
    <property type="match status" value="1"/>
</dbReference>
<dbReference type="SUPFAM" id="SSF46906">
    <property type="entry name" value="Ribosomal protein L11, C-terminal domain"/>
    <property type="match status" value="1"/>
</dbReference>
<dbReference type="PROSITE" id="PS00359">
    <property type="entry name" value="RIBOSOMAL_L11"/>
    <property type="match status" value="1"/>
</dbReference>
<evidence type="ECO:0000255" key="1">
    <source>
        <dbReference type="HAMAP-Rule" id="MF_00736"/>
    </source>
</evidence>
<evidence type="ECO:0000305" key="2"/>
<name>RL11_CHRSD</name>
<reference key="1">
    <citation type="journal article" date="2011" name="Stand. Genomic Sci.">
        <title>Complete genome sequence of the halophilic and highly halotolerant Chromohalobacter salexigens type strain (1H11(T)).</title>
        <authorList>
            <person name="Copeland A."/>
            <person name="O'Connor K."/>
            <person name="Lucas S."/>
            <person name="Lapidus A."/>
            <person name="Berry K.W."/>
            <person name="Detter J.C."/>
            <person name="Del Rio T.G."/>
            <person name="Hammon N."/>
            <person name="Dalin E."/>
            <person name="Tice H."/>
            <person name="Pitluck S."/>
            <person name="Bruce D."/>
            <person name="Goodwin L."/>
            <person name="Han C."/>
            <person name="Tapia R."/>
            <person name="Saunders E."/>
            <person name="Schmutz J."/>
            <person name="Brettin T."/>
            <person name="Larimer F."/>
            <person name="Land M."/>
            <person name="Hauser L."/>
            <person name="Vargas C."/>
            <person name="Nieto J.J."/>
            <person name="Kyrpides N.C."/>
            <person name="Ivanova N."/>
            <person name="Goker M."/>
            <person name="Klenk H.P."/>
            <person name="Csonka L.N."/>
            <person name="Woyke T."/>
        </authorList>
    </citation>
    <scope>NUCLEOTIDE SEQUENCE [LARGE SCALE GENOMIC DNA]</scope>
    <source>
        <strain>ATCC BAA-138 / DSM 3043 / CIP 106854 / NCIMB 13768 / 1H11</strain>
    </source>
</reference>
<sequence>MAKKVQAYIKLQVAAGKANPSPPVGPALGQHGVNIMEFCKAFNAETQDIEPGLPTPVVITVYSDRSFTFITKTPPAAVLLKKAAGIKSGSGVPNKTKVGTVTREQLEEIAKTKEPDLTASDLDAAVRTIAGSARSMGLNVEGL</sequence>
<comment type="function">
    <text evidence="1">Forms part of the ribosomal stalk which helps the ribosome interact with GTP-bound translation factors.</text>
</comment>
<comment type="subunit">
    <text evidence="1">Part of the ribosomal stalk of the 50S ribosomal subunit. Interacts with L10 and the large rRNA to form the base of the stalk. L10 forms an elongated spine to which L12 dimers bind in a sequential fashion forming a multimeric L10(L12)X complex.</text>
</comment>
<comment type="PTM">
    <text evidence="1">One or more lysine residues are methylated.</text>
</comment>
<comment type="similarity">
    <text evidence="1">Belongs to the universal ribosomal protein uL11 family.</text>
</comment>
<gene>
    <name evidence="1" type="primary">rplK</name>
    <name type="ordered locus">Csal_0410</name>
</gene>